<dbReference type="EC" id="7.1.2.2" evidence="1"/>
<dbReference type="EMBL" id="AE009947">
    <property type="protein sequence ID" value="AAT44691.1"/>
    <property type="status" value="ALT_SEQ"/>
    <property type="molecule type" value="Genomic_DNA"/>
</dbReference>
<dbReference type="SMR" id="Q6L3A1"/>
<dbReference type="GO" id="GO:0009535">
    <property type="term" value="C:chloroplast thylakoid membrane"/>
    <property type="evidence" value="ECO:0007669"/>
    <property type="project" value="UniProtKB-SubCell"/>
</dbReference>
<dbReference type="GO" id="GO:0045259">
    <property type="term" value="C:proton-transporting ATP synthase complex"/>
    <property type="evidence" value="ECO:0007669"/>
    <property type="project" value="UniProtKB-KW"/>
</dbReference>
<dbReference type="GO" id="GO:0043531">
    <property type="term" value="F:ADP binding"/>
    <property type="evidence" value="ECO:0007669"/>
    <property type="project" value="TreeGrafter"/>
</dbReference>
<dbReference type="GO" id="GO:0005524">
    <property type="term" value="F:ATP binding"/>
    <property type="evidence" value="ECO:0007669"/>
    <property type="project" value="UniProtKB-UniRule"/>
</dbReference>
<dbReference type="GO" id="GO:0046933">
    <property type="term" value="F:proton-transporting ATP synthase activity, rotational mechanism"/>
    <property type="evidence" value="ECO:0007669"/>
    <property type="project" value="UniProtKB-UniRule"/>
</dbReference>
<dbReference type="CDD" id="cd18113">
    <property type="entry name" value="ATP-synt_F1_alpha_C"/>
    <property type="match status" value="1"/>
</dbReference>
<dbReference type="CDD" id="cd18116">
    <property type="entry name" value="ATP-synt_F1_alpha_N"/>
    <property type="match status" value="1"/>
</dbReference>
<dbReference type="CDD" id="cd01132">
    <property type="entry name" value="F1-ATPase_alpha_CD"/>
    <property type="match status" value="1"/>
</dbReference>
<dbReference type="FunFam" id="1.20.150.20:FF:000001">
    <property type="entry name" value="ATP synthase subunit alpha"/>
    <property type="match status" value="1"/>
</dbReference>
<dbReference type="FunFam" id="2.40.30.20:FF:000001">
    <property type="entry name" value="ATP synthase subunit alpha"/>
    <property type="match status" value="1"/>
</dbReference>
<dbReference type="FunFam" id="3.40.50.300:FF:000002">
    <property type="entry name" value="ATP synthase subunit alpha"/>
    <property type="match status" value="1"/>
</dbReference>
<dbReference type="Gene3D" id="2.40.30.20">
    <property type="match status" value="1"/>
</dbReference>
<dbReference type="Gene3D" id="1.20.150.20">
    <property type="entry name" value="ATP synthase alpha/beta chain, C-terminal domain"/>
    <property type="match status" value="1"/>
</dbReference>
<dbReference type="Gene3D" id="3.40.50.300">
    <property type="entry name" value="P-loop containing nucleotide triphosphate hydrolases"/>
    <property type="match status" value="1"/>
</dbReference>
<dbReference type="HAMAP" id="MF_01346">
    <property type="entry name" value="ATP_synth_alpha_bact"/>
    <property type="match status" value="1"/>
</dbReference>
<dbReference type="InterPro" id="IPR023366">
    <property type="entry name" value="ATP_synth_asu-like_sf"/>
</dbReference>
<dbReference type="InterPro" id="IPR000793">
    <property type="entry name" value="ATP_synth_asu_C"/>
</dbReference>
<dbReference type="InterPro" id="IPR038376">
    <property type="entry name" value="ATP_synth_asu_C_sf"/>
</dbReference>
<dbReference type="InterPro" id="IPR033732">
    <property type="entry name" value="ATP_synth_F1_a_nt-bd_dom"/>
</dbReference>
<dbReference type="InterPro" id="IPR005294">
    <property type="entry name" value="ATP_synth_F1_asu"/>
</dbReference>
<dbReference type="InterPro" id="IPR020003">
    <property type="entry name" value="ATPase_a/bsu_AS"/>
</dbReference>
<dbReference type="InterPro" id="IPR004100">
    <property type="entry name" value="ATPase_F1/V1/A1_a/bsu_N"/>
</dbReference>
<dbReference type="InterPro" id="IPR036121">
    <property type="entry name" value="ATPase_F1/V1/A1_a/bsu_N_sf"/>
</dbReference>
<dbReference type="InterPro" id="IPR000194">
    <property type="entry name" value="ATPase_F1/V1/A1_a/bsu_nucl-bd"/>
</dbReference>
<dbReference type="InterPro" id="IPR027417">
    <property type="entry name" value="P-loop_NTPase"/>
</dbReference>
<dbReference type="NCBIfam" id="TIGR00962">
    <property type="entry name" value="atpA"/>
    <property type="match status" value="1"/>
</dbReference>
<dbReference type="NCBIfam" id="NF009884">
    <property type="entry name" value="PRK13343.1"/>
    <property type="match status" value="1"/>
</dbReference>
<dbReference type="PANTHER" id="PTHR48082:SF6">
    <property type="entry name" value="ATP SYNTHASE SUBUNIT ALPHA, CHLOROPLASTIC"/>
    <property type="match status" value="1"/>
</dbReference>
<dbReference type="PANTHER" id="PTHR48082">
    <property type="entry name" value="ATP SYNTHASE SUBUNIT ALPHA, MITOCHONDRIAL"/>
    <property type="match status" value="1"/>
</dbReference>
<dbReference type="Pfam" id="PF00006">
    <property type="entry name" value="ATP-synt_ab"/>
    <property type="match status" value="1"/>
</dbReference>
<dbReference type="Pfam" id="PF00306">
    <property type="entry name" value="ATP-synt_ab_C"/>
    <property type="match status" value="1"/>
</dbReference>
<dbReference type="Pfam" id="PF02874">
    <property type="entry name" value="ATP-synt_ab_N"/>
    <property type="match status" value="1"/>
</dbReference>
<dbReference type="PIRSF" id="PIRSF039088">
    <property type="entry name" value="F_ATPase_subunit_alpha"/>
    <property type="match status" value="1"/>
</dbReference>
<dbReference type="SUPFAM" id="SSF47917">
    <property type="entry name" value="C-terminal domain of alpha and beta subunits of F1 ATP synthase"/>
    <property type="match status" value="1"/>
</dbReference>
<dbReference type="SUPFAM" id="SSF50615">
    <property type="entry name" value="N-terminal domain of alpha and beta subunits of F1 ATP synthase"/>
    <property type="match status" value="1"/>
</dbReference>
<dbReference type="SUPFAM" id="SSF52540">
    <property type="entry name" value="P-loop containing nucleoside triphosphate hydrolases"/>
    <property type="match status" value="1"/>
</dbReference>
<dbReference type="PROSITE" id="PS00152">
    <property type="entry name" value="ATPASE_ALPHA_BETA"/>
    <property type="match status" value="1"/>
</dbReference>
<accession>Q6L3A1</accession>
<keyword id="KW-0066">ATP synthesis</keyword>
<keyword id="KW-0067">ATP-binding</keyword>
<keyword id="KW-0139">CF(1)</keyword>
<keyword id="KW-0150">Chloroplast</keyword>
<keyword id="KW-0375">Hydrogen ion transport</keyword>
<keyword id="KW-0406">Ion transport</keyword>
<keyword id="KW-0472">Membrane</keyword>
<keyword id="KW-0547">Nucleotide-binding</keyword>
<keyword id="KW-0934">Plastid</keyword>
<keyword id="KW-0691">RNA editing</keyword>
<keyword id="KW-0793">Thylakoid</keyword>
<keyword id="KW-1278">Translocase</keyword>
<keyword id="KW-0813">Transport</keyword>
<protein>
    <recommendedName>
        <fullName evidence="1">ATP synthase subunit alpha, chloroplastic</fullName>
        <ecNumber evidence="1">7.1.2.2</ecNumber>
    </recommendedName>
    <alternativeName>
        <fullName evidence="1">ATP synthase F1 sector subunit alpha</fullName>
    </alternativeName>
    <alternativeName>
        <fullName evidence="1">F-ATPase subunit alpha</fullName>
    </alternativeName>
</protein>
<evidence type="ECO:0000255" key="1">
    <source>
        <dbReference type="HAMAP-Rule" id="MF_01346"/>
    </source>
</evidence>
<evidence type="ECO:0000269" key="2">
    <source>
    </source>
</evidence>
<organism>
    <name type="scientific">Saccharum hybrid</name>
    <name type="common">Sugarcane</name>
    <dbReference type="NCBI Taxonomy" id="15819"/>
    <lineage>
        <taxon>Eukaryota</taxon>
        <taxon>Viridiplantae</taxon>
        <taxon>Streptophyta</taxon>
        <taxon>Embryophyta</taxon>
        <taxon>Tracheophyta</taxon>
        <taxon>Spermatophyta</taxon>
        <taxon>Magnoliopsida</taxon>
        <taxon>Liliopsida</taxon>
        <taxon>Poales</taxon>
        <taxon>Poaceae</taxon>
        <taxon>PACMAD clade</taxon>
        <taxon>Panicoideae</taxon>
        <taxon>Andropogonodae</taxon>
        <taxon>Andropogoneae</taxon>
        <taxon>Saccharinae</taxon>
        <taxon>Saccharum</taxon>
    </lineage>
</organism>
<feature type="chain" id="PRO_0000226945" description="ATP synthase subunit alpha, chloroplastic">
    <location>
        <begin position="1"/>
        <end position="507"/>
    </location>
</feature>
<feature type="binding site" evidence="1">
    <location>
        <begin position="169"/>
        <end position="176"/>
    </location>
    <ligand>
        <name>ATP</name>
        <dbReference type="ChEBI" id="CHEBI:30616"/>
    </ligand>
</feature>
<feature type="site" description="Required for activity" evidence="1">
    <location>
        <position position="362"/>
    </location>
</feature>
<sequence>MATLRVDEINKILRERIEQYNRKVGIENIGRVVQVGDGIARIIGLGEIMSGELVEFAEGTRGIALNLESKNVGIVLMGDGLMIQEGSFVKATGRIAQIPVSEAYLGRVINALAKPIDGRGEIVASESRLIESPAPGIISRRSVYEPLQTGLIAIDSMIPIGRGQRELIIGDRQTGKTAVATDTILNQKGQDVICVYVAIGQRASSVAQVVTTFHEEGAMEYTIVVAEMADSPATLQYLAPYTGAALAEYFMYRERHTLIIYDDLSKQAQAYRQMSLLLRRPPGREAYPGDVFYLHSRLLERAAKFNSLLGEGSMTALPIVETQSGDVSAYIPTNVISITDGQIFLSADLFNAGIRPAINVGISVSRVGSAAQIKAMKQVAGKLKLELAQFAELQAFAQFASALDKTSQNQLARGRRLRELLKQSQSNPLPVEEQVATIYTGTRGYLDSLEIEQVKKFLDELRKHLKDTKPQFQEIISSSKTFTEQAETLLKEAIQEQLERFSLQEQT</sequence>
<proteinExistence type="evidence at transcript level"/>
<geneLocation type="chloroplast"/>
<reference key="1">
    <citation type="journal article" date="2004" name="Curr. Genet.">
        <title>Structural features and transcript-editing analysis of sugarcane (Saccharum officinarum L.) chloroplast genome.</title>
        <authorList>
            <person name="Calsa T. Jr."/>
            <person name="Carraro D.M."/>
            <person name="Benatti M.R."/>
            <person name="Barbosa A.C."/>
            <person name="Kitajima J.P."/>
            <person name="Carrer H."/>
        </authorList>
    </citation>
    <scope>NUCLEOTIDE SEQUENCE [LARGE SCALE GENOMIC DNA]</scope>
    <scope>RNA EDITING</scope>
    <source>
        <strain>cv. SP-80-3280</strain>
    </source>
</reference>
<comment type="function">
    <text>Produces ATP from ADP in the presence of a proton gradient across the membrane. The alpha chain is a regulatory subunit.</text>
</comment>
<comment type="catalytic activity">
    <reaction evidence="1">
        <text>ATP + H2O + 4 H(+)(in) = ADP + phosphate + 5 H(+)(out)</text>
        <dbReference type="Rhea" id="RHEA:57720"/>
        <dbReference type="ChEBI" id="CHEBI:15377"/>
        <dbReference type="ChEBI" id="CHEBI:15378"/>
        <dbReference type="ChEBI" id="CHEBI:30616"/>
        <dbReference type="ChEBI" id="CHEBI:43474"/>
        <dbReference type="ChEBI" id="CHEBI:456216"/>
        <dbReference type="EC" id="7.1.2.2"/>
    </reaction>
</comment>
<comment type="subunit">
    <text evidence="1">F-type ATPases have 2 components, CF(1) - the catalytic core - and CF(0) - the membrane proton channel. CF(1) has five subunits: alpha(3), beta(3), gamma(1), delta(1), epsilon(1). CF(0) has four main subunits: a, b, b' and c.</text>
</comment>
<comment type="subcellular location">
    <subcellularLocation>
        <location evidence="1">Plastid</location>
        <location evidence="1">Chloroplast thylakoid membrane</location>
        <topology evidence="1">Peripheral membrane protein</topology>
    </subcellularLocation>
</comment>
<comment type="RNA editing">
    <location>
        <position position="383" evidence="2"/>
    </location>
</comment>
<comment type="similarity">
    <text evidence="1">Belongs to the ATPase alpha/beta chains family.</text>
</comment>
<gene>
    <name evidence="1" type="primary">atpA</name>
    <name type="ordered locus">PS113</name>
</gene>
<name>ATPA_SACHY</name>